<organism>
    <name type="scientific">Arabidopsis thaliana</name>
    <name type="common">Mouse-ear cress</name>
    <dbReference type="NCBI Taxonomy" id="3702"/>
    <lineage>
        <taxon>Eukaryota</taxon>
        <taxon>Viridiplantae</taxon>
        <taxon>Streptophyta</taxon>
        <taxon>Embryophyta</taxon>
        <taxon>Tracheophyta</taxon>
        <taxon>Spermatophyta</taxon>
        <taxon>Magnoliopsida</taxon>
        <taxon>eudicotyledons</taxon>
        <taxon>Gunneridae</taxon>
        <taxon>Pentapetalae</taxon>
        <taxon>rosids</taxon>
        <taxon>malvids</taxon>
        <taxon>Brassicales</taxon>
        <taxon>Brassicaceae</taxon>
        <taxon>Camelineae</taxon>
        <taxon>Arabidopsis</taxon>
    </lineage>
</organism>
<gene>
    <name evidence="12" type="primary">NIK1</name>
    <name evidence="14" type="ordered locus">At5g16000</name>
    <name evidence="15" type="ORF">F1N13_140</name>
</gene>
<feature type="signal peptide" evidence="4">
    <location>
        <begin position="1"/>
        <end position="31"/>
    </location>
</feature>
<feature type="chain" id="PRO_0000409725" description="Protein NSP-INTERACTING KINASE 1">
    <location>
        <begin position="32"/>
        <end position="638"/>
    </location>
</feature>
<feature type="topological domain" description="Extracellular" evidence="4">
    <location>
        <begin position="32"/>
        <end position="248"/>
    </location>
</feature>
<feature type="transmembrane region" description="Helical" evidence="4">
    <location>
        <begin position="249"/>
        <end position="269"/>
    </location>
</feature>
<feature type="topological domain" description="Cytoplasmic" evidence="4">
    <location>
        <begin position="270"/>
        <end position="638"/>
    </location>
</feature>
<feature type="repeat" description="LRR 1" evidence="4">
    <location>
        <begin position="104"/>
        <end position="128"/>
    </location>
</feature>
<feature type="repeat" description="LRR 2" evidence="4">
    <location>
        <begin position="130"/>
        <end position="152"/>
    </location>
</feature>
<feature type="repeat" description="LRR 3" evidence="4">
    <location>
        <begin position="153"/>
        <end position="175"/>
    </location>
</feature>
<feature type="repeat" description="LRR 4" evidence="4">
    <location>
        <begin position="177"/>
        <end position="200"/>
    </location>
</feature>
<feature type="domain" description="Protein kinase" evidence="5">
    <location>
        <begin position="312"/>
        <end position="593"/>
    </location>
</feature>
<feature type="region of interest" description="Interaction with geminivirus NSP protein">
    <location>
        <begin position="422"/>
        <end position="502"/>
    </location>
</feature>
<feature type="active site" description="Proton acceptor" evidence="5 6">
    <location>
        <position position="435"/>
    </location>
</feature>
<feature type="binding site" evidence="5">
    <location>
        <begin position="318"/>
        <end position="326"/>
    </location>
    <ligand>
        <name>ATP</name>
        <dbReference type="ChEBI" id="CHEBI:30616"/>
    </ligand>
</feature>
<feature type="binding site" evidence="5">
    <location>
        <position position="340"/>
    </location>
    <ligand>
        <name>ATP</name>
        <dbReference type="ChEBI" id="CHEBI:30616"/>
    </ligand>
</feature>
<feature type="modified residue" description="Phosphothreonine" evidence="3">
    <location>
        <position position="309"/>
    </location>
</feature>
<feature type="modified residue" description="Phosphothreonine" evidence="2">
    <location>
        <position position="335"/>
    </location>
</feature>
<feature type="modified residue" description="Phosphoserine" evidence="1">
    <location>
        <position position="393"/>
    </location>
</feature>
<feature type="modified residue" description="Phosphoserine" evidence="3">
    <location>
        <position position="396"/>
    </location>
</feature>
<feature type="modified residue" description="Phosphothreonine" evidence="2">
    <location>
        <position position="468"/>
    </location>
</feature>
<feature type="modified residue" description="Phosphothreonine" evidence="10">
    <location>
        <position position="469"/>
    </location>
</feature>
<feature type="modified residue" description="Phosphothreonine" evidence="10">
    <location>
        <position position="474"/>
    </location>
</feature>
<feature type="modified residue" description="Phosphotyrosine" evidence="1">
    <location>
        <position position="482"/>
    </location>
</feature>
<feature type="modified residue" description="Phosphoserine" evidence="1">
    <location>
        <position position="484"/>
    </location>
</feature>
<feature type="modified residue" description="Phosphothreonine" evidence="1">
    <location>
        <position position="485"/>
    </location>
</feature>
<feature type="modified residue" description="Phosphoserine" evidence="1">
    <location>
        <position position="489"/>
    </location>
</feature>
<feature type="modified residue" description="Phosphothreonine" evidence="1">
    <location>
        <position position="566"/>
    </location>
</feature>
<feature type="glycosylation site" description="N-linked (GlcNAc...) asparagine" evidence="4">
    <location>
        <position position="92"/>
    </location>
</feature>
<feature type="glycosylation site" description="N-linked (GlcNAc...) asparagine" evidence="4">
    <location>
        <position position="103"/>
    </location>
</feature>
<feature type="glycosylation site" description="N-linked (GlcNAc...) asparagine" evidence="4">
    <location>
        <position position="162"/>
    </location>
</feature>
<feature type="glycosylation site" description="N-linked (GlcNAc...) asparagine" evidence="4">
    <location>
        <position position="175"/>
    </location>
</feature>
<feature type="glycosylation site" description="N-linked (GlcNAc...) asparagine" evidence="4">
    <location>
        <position position="188"/>
    </location>
</feature>
<feature type="glycosylation site" description="N-linked (GlcNAc...) asparagine" evidence="4">
    <location>
        <position position="219"/>
    </location>
</feature>
<feature type="glycosylation site" description="N-linked (GlcNAc...) asparagine" evidence="4">
    <location>
        <position position="231"/>
    </location>
</feature>
<feature type="mutagenesis site" description="Impaired autophosphorylation." evidence="10">
    <original>T</original>
    <variation>A</variation>
    <location>
        <position position="468"/>
    </location>
</feature>
<feature type="mutagenesis site" description="Enhanced kinase activation." evidence="10">
    <original>T</original>
    <variation>A</variation>
    <location>
        <position position="469"/>
    </location>
</feature>
<feature type="mutagenesis site" description="Impaired autophosphorylation." evidence="10">
    <original>T</original>
    <variation>A</variation>
    <location>
        <position position="474"/>
    </location>
</feature>
<feature type="mutagenesis site" description="Constitutive activation." evidence="11">
    <original>T</original>
    <variation>D</variation>
    <location>
        <position position="474"/>
    </location>
</feature>
<feature type="mutagenesis site" description="Impaired autophosphorylation." evidence="10">
    <original>T</original>
    <variation>E</variation>
    <location>
        <position position="474"/>
    </location>
</feature>
<feature type="sequence conflict" description="In Ref. 5; AAM65586." evidence="13" ref="5">
    <original>K</original>
    <variation>T</variation>
    <location>
        <position position="118"/>
    </location>
</feature>
<feature type="sequence conflict" description="In Ref. 5; AAM65586." evidence="13" ref="5">
    <original>V</original>
    <variation>I</variation>
    <location>
        <position position="337"/>
    </location>
</feature>
<dbReference type="EC" id="2.7.11.1" evidence="7"/>
<dbReference type="EMBL" id="AL391145">
    <property type="protein sequence ID" value="CAC01799.1"/>
    <property type="molecule type" value="Genomic_DNA"/>
</dbReference>
<dbReference type="EMBL" id="CP002688">
    <property type="protein sequence ID" value="AED92233.1"/>
    <property type="molecule type" value="Genomic_DNA"/>
</dbReference>
<dbReference type="EMBL" id="AY074263">
    <property type="protein sequence ID" value="AAL66960.1"/>
    <property type="molecule type" value="mRNA"/>
</dbReference>
<dbReference type="EMBL" id="BT002366">
    <property type="protein sequence ID" value="AAN86199.1"/>
    <property type="molecule type" value="mRNA"/>
</dbReference>
<dbReference type="EMBL" id="FJ708777">
    <property type="protein sequence ID" value="ACN59368.1"/>
    <property type="molecule type" value="mRNA"/>
</dbReference>
<dbReference type="EMBL" id="AY088040">
    <property type="protein sequence ID" value="AAM65586.1"/>
    <property type="status" value="ALT_INIT"/>
    <property type="molecule type" value="mRNA"/>
</dbReference>
<dbReference type="PIR" id="T51383">
    <property type="entry name" value="T51383"/>
</dbReference>
<dbReference type="RefSeq" id="NP_197104.1">
    <property type="nucleotide sequence ID" value="NM_121605.3"/>
</dbReference>
<dbReference type="SMR" id="Q9LFS4"/>
<dbReference type="BioGRID" id="16733">
    <property type="interactions" value="63"/>
</dbReference>
<dbReference type="DIP" id="DIP-61517N"/>
<dbReference type="FunCoup" id="Q9LFS4">
    <property type="interactions" value="173"/>
</dbReference>
<dbReference type="IntAct" id="Q9LFS4">
    <property type="interactions" value="76"/>
</dbReference>
<dbReference type="STRING" id="3702.Q9LFS4"/>
<dbReference type="GlyCosmos" id="Q9LFS4">
    <property type="glycosylation" value="7 sites, No reported glycans"/>
</dbReference>
<dbReference type="GlyGen" id="Q9LFS4">
    <property type="glycosylation" value="7 sites"/>
</dbReference>
<dbReference type="iPTMnet" id="Q9LFS4"/>
<dbReference type="PaxDb" id="3702-AT5G16000.1"/>
<dbReference type="ProteomicsDB" id="251151"/>
<dbReference type="EnsemblPlants" id="AT5G16000.1">
    <property type="protein sequence ID" value="AT5G16000.1"/>
    <property type="gene ID" value="AT5G16000"/>
</dbReference>
<dbReference type="GeneID" id="831457"/>
<dbReference type="Gramene" id="AT5G16000.1">
    <property type="protein sequence ID" value="AT5G16000.1"/>
    <property type="gene ID" value="AT5G16000"/>
</dbReference>
<dbReference type="KEGG" id="ath:AT5G16000"/>
<dbReference type="Araport" id="AT5G16000"/>
<dbReference type="TAIR" id="AT5G16000">
    <property type="gene designation" value="NIK1"/>
</dbReference>
<dbReference type="eggNOG" id="ENOG502QVM7">
    <property type="taxonomic scope" value="Eukaryota"/>
</dbReference>
<dbReference type="HOGENOM" id="CLU_000288_92_7_1"/>
<dbReference type="InParanoid" id="Q9LFS4"/>
<dbReference type="OMA" id="WITRQRI"/>
<dbReference type="PhylomeDB" id="Q9LFS4"/>
<dbReference type="PRO" id="PR:Q9LFS4"/>
<dbReference type="Proteomes" id="UP000006548">
    <property type="component" value="Chromosome 5"/>
</dbReference>
<dbReference type="ExpressionAtlas" id="Q9LFS4">
    <property type="expression patterns" value="baseline and differential"/>
</dbReference>
<dbReference type="GO" id="GO:0005737">
    <property type="term" value="C:cytoplasm"/>
    <property type="evidence" value="ECO:0000314"/>
    <property type="project" value="CAFA"/>
</dbReference>
<dbReference type="GO" id="GO:0005654">
    <property type="term" value="C:nucleoplasm"/>
    <property type="evidence" value="ECO:0000314"/>
    <property type="project" value="CAFA"/>
</dbReference>
<dbReference type="GO" id="GO:0005886">
    <property type="term" value="C:plasma membrane"/>
    <property type="evidence" value="ECO:0007669"/>
    <property type="project" value="UniProtKB-SubCell"/>
</dbReference>
<dbReference type="GO" id="GO:0005524">
    <property type="term" value="F:ATP binding"/>
    <property type="evidence" value="ECO:0007669"/>
    <property type="project" value="UniProtKB-KW"/>
</dbReference>
<dbReference type="GO" id="GO:0042802">
    <property type="term" value="F:identical protein binding"/>
    <property type="evidence" value="ECO:0000353"/>
    <property type="project" value="IntAct"/>
</dbReference>
<dbReference type="GO" id="GO:0004672">
    <property type="term" value="F:protein kinase activity"/>
    <property type="evidence" value="ECO:0000315"/>
    <property type="project" value="CAFA"/>
</dbReference>
<dbReference type="GO" id="GO:0106310">
    <property type="term" value="F:protein serine kinase activity"/>
    <property type="evidence" value="ECO:0007669"/>
    <property type="project" value="RHEA"/>
</dbReference>
<dbReference type="GO" id="GO:0004674">
    <property type="term" value="F:protein serine/threonine kinase activity"/>
    <property type="evidence" value="ECO:0007669"/>
    <property type="project" value="UniProtKB-KW"/>
</dbReference>
<dbReference type="GO" id="GO:0051607">
    <property type="term" value="P:defense response to virus"/>
    <property type="evidence" value="ECO:0000315"/>
    <property type="project" value="CAFA"/>
</dbReference>
<dbReference type="GO" id="GO:0040015">
    <property type="term" value="P:negative regulation of multicellular organism growth"/>
    <property type="evidence" value="ECO:0000315"/>
    <property type="project" value="CAFA"/>
</dbReference>
<dbReference type="GO" id="GO:0046777">
    <property type="term" value="P:protein autophosphorylation"/>
    <property type="evidence" value="ECO:0000315"/>
    <property type="project" value="CAFA"/>
</dbReference>
<dbReference type="GO" id="GO:0034504">
    <property type="term" value="P:protein localization to nucleus"/>
    <property type="evidence" value="ECO:0000315"/>
    <property type="project" value="CAFA"/>
</dbReference>
<dbReference type="GO" id="GO:0006468">
    <property type="term" value="P:protein phosphorylation"/>
    <property type="evidence" value="ECO:0000315"/>
    <property type="project" value="CAFA"/>
</dbReference>
<dbReference type="FunFam" id="3.80.10.10:FF:000021">
    <property type="entry name" value="Putative LRR receptor-like serine/threonine-protein kinase"/>
    <property type="match status" value="1"/>
</dbReference>
<dbReference type="FunFam" id="3.30.200.20:FF:000015">
    <property type="entry name" value="Somatic embryogenesis receptor kinase 1"/>
    <property type="match status" value="1"/>
</dbReference>
<dbReference type="FunFam" id="1.10.510.10:FF:000016">
    <property type="entry name" value="Somatic embryogenesis receptor-like kinase 1"/>
    <property type="match status" value="1"/>
</dbReference>
<dbReference type="Gene3D" id="3.30.200.20">
    <property type="entry name" value="Phosphorylase Kinase, domain 1"/>
    <property type="match status" value="1"/>
</dbReference>
<dbReference type="Gene3D" id="3.80.10.10">
    <property type="entry name" value="Ribonuclease Inhibitor"/>
    <property type="match status" value="1"/>
</dbReference>
<dbReference type="Gene3D" id="1.10.510.10">
    <property type="entry name" value="Transferase(Phosphotransferase) domain 1"/>
    <property type="match status" value="1"/>
</dbReference>
<dbReference type="InterPro" id="IPR011009">
    <property type="entry name" value="Kinase-like_dom_sf"/>
</dbReference>
<dbReference type="InterPro" id="IPR032675">
    <property type="entry name" value="LRR_dom_sf"/>
</dbReference>
<dbReference type="InterPro" id="IPR013210">
    <property type="entry name" value="LRR_N_plant-typ"/>
</dbReference>
<dbReference type="InterPro" id="IPR055414">
    <property type="entry name" value="LRR_R13L4/SHOC2-like"/>
</dbReference>
<dbReference type="InterPro" id="IPR000719">
    <property type="entry name" value="Prot_kinase_dom"/>
</dbReference>
<dbReference type="InterPro" id="IPR017441">
    <property type="entry name" value="Protein_kinase_ATP_BS"/>
</dbReference>
<dbReference type="InterPro" id="IPR001245">
    <property type="entry name" value="Ser-Thr/Tyr_kinase_cat_dom"/>
</dbReference>
<dbReference type="InterPro" id="IPR008271">
    <property type="entry name" value="Ser/Thr_kinase_AS"/>
</dbReference>
<dbReference type="PANTHER" id="PTHR47988">
    <property type="entry name" value="SOMATIC EMBRYOGENESIS RECEPTOR KINASE 1"/>
    <property type="match status" value="1"/>
</dbReference>
<dbReference type="Pfam" id="PF23598">
    <property type="entry name" value="LRR_14"/>
    <property type="match status" value="1"/>
</dbReference>
<dbReference type="Pfam" id="PF08263">
    <property type="entry name" value="LRRNT_2"/>
    <property type="match status" value="1"/>
</dbReference>
<dbReference type="Pfam" id="PF07714">
    <property type="entry name" value="PK_Tyr_Ser-Thr"/>
    <property type="match status" value="1"/>
</dbReference>
<dbReference type="SMART" id="SM00220">
    <property type="entry name" value="S_TKc"/>
    <property type="match status" value="1"/>
</dbReference>
<dbReference type="SUPFAM" id="SSF52058">
    <property type="entry name" value="L domain-like"/>
    <property type="match status" value="1"/>
</dbReference>
<dbReference type="SUPFAM" id="SSF56112">
    <property type="entry name" value="Protein kinase-like (PK-like)"/>
    <property type="match status" value="1"/>
</dbReference>
<dbReference type="PROSITE" id="PS00107">
    <property type="entry name" value="PROTEIN_KINASE_ATP"/>
    <property type="match status" value="1"/>
</dbReference>
<dbReference type="PROSITE" id="PS50011">
    <property type="entry name" value="PROTEIN_KINASE_DOM"/>
    <property type="match status" value="1"/>
</dbReference>
<dbReference type="PROSITE" id="PS00108">
    <property type="entry name" value="PROTEIN_KINASE_ST"/>
    <property type="match status" value="1"/>
</dbReference>
<sequence length="638" mass="70546">MESTIVMMMMITRSFFCFLGFLCLLCSSVHGLLSPKGVNFEVQALMDIKASLHDPHGVLDNWDRDAVDPCSWTMVTCSSENFVIGLGTPSQNLSGTLSPSITNLTNLRIVLLQNNNIKGKIPAEIGRLTRLETLDLSDNFFHGEIPFSVGYLQSLQYLRLNNNSLSGVFPLSLSNMTQLAFLDLSYNNLSGPVPRFAAKTFSIVGNPLICPTGTEPDCNGTTLIPMSMNLNQTGVPLYAGGSRNHKMAIAVGSSVGTVSLIFIAVGLFLWWRQRHNQNTFFDVKDGNHHEEVSLGNLRRFGFRELQIATNNFSSKNLLGKGGYGNVYKGILGDSTVVAVKRLKDGGALGGEIQFQTEVEMISLAVHRNLLRLYGFCITQTEKLLVYPYMSNGSVASRMKAKPVLDWSIRKRIAIGAARGLVYLHEQCDPKIIHRDVKAANILLDDYCEAVVGDFGLAKLLDHQDSHVTTAVRGTVGHIAPEYLSTGQSSEKTDVFGFGILLLELVTGQRAFEFGKAANQKGVMLDWVKKIHQEKKLELLVDKELLKKKSYDEIELDEMVRVALLCTQYLPGHRPKMSEVVRMLEGDGLAEKWEASQRSDSVSKCSNRINELMSSSDRYSDLTDDSSLLVQAMELSGPR</sequence>
<protein>
    <recommendedName>
        <fullName evidence="12">Protein NSP-INTERACTING KINASE 1</fullName>
        <shortName evidence="12">AtNIK1</shortName>
        <ecNumber evidence="7">2.7.11.1</ecNumber>
    </recommendedName>
    <alternativeName>
        <fullName evidence="12">LRR receptor-like serine/threonine-protein kinase NIK1</fullName>
    </alternativeName>
</protein>
<accession>Q9LFS4</accession>
<accession>Q8LA44</accession>
<comment type="function">
    <text evidence="7 8 9 10 11">Involved in defense response to geminivirus and begomovirus infection via regulation of the nuclear trafficking of RPL10A. Phosphorylates RPL10A in vitro (PubMed:15489295, PubMed:18789471, PubMed:19112492, PubMed:19492062, PubMed:25707794). Activation of NIK1 down-regulates cytosolic translation (PubMed:25707794).</text>
</comment>
<comment type="catalytic activity">
    <reaction evidence="7">
        <text>L-seryl-[protein] + ATP = O-phospho-L-seryl-[protein] + ADP + H(+)</text>
        <dbReference type="Rhea" id="RHEA:17989"/>
        <dbReference type="Rhea" id="RHEA-COMP:9863"/>
        <dbReference type="Rhea" id="RHEA-COMP:11604"/>
        <dbReference type="ChEBI" id="CHEBI:15378"/>
        <dbReference type="ChEBI" id="CHEBI:29999"/>
        <dbReference type="ChEBI" id="CHEBI:30616"/>
        <dbReference type="ChEBI" id="CHEBI:83421"/>
        <dbReference type="ChEBI" id="CHEBI:456216"/>
        <dbReference type="EC" id="2.7.11.1"/>
    </reaction>
</comment>
<comment type="catalytic activity">
    <reaction evidence="7">
        <text>L-threonyl-[protein] + ATP = O-phospho-L-threonyl-[protein] + ADP + H(+)</text>
        <dbReference type="Rhea" id="RHEA:46608"/>
        <dbReference type="Rhea" id="RHEA-COMP:11060"/>
        <dbReference type="Rhea" id="RHEA-COMP:11605"/>
        <dbReference type="ChEBI" id="CHEBI:15378"/>
        <dbReference type="ChEBI" id="CHEBI:30013"/>
        <dbReference type="ChEBI" id="CHEBI:30616"/>
        <dbReference type="ChEBI" id="CHEBI:61977"/>
        <dbReference type="ChEBI" id="CHEBI:456216"/>
        <dbReference type="EC" id="2.7.11.1"/>
    </reaction>
</comment>
<comment type="activity regulation">
    <text evidence="7">Inhibited by the viral nuclear shuttle protein (NSP) that binds to the region required for oligomerization.</text>
</comment>
<comment type="subunit">
    <text evidence="7 8 9">Oligomer. Interacts with geminivirus nuclear shuttle protein (NSP) (PubMed:15489295). Interacts with RPL10A and RPL18B (PubMed:18789471, PubMed:19112492).</text>
</comment>
<comment type="interaction">
    <interactant intactId="EBI-16146189">
        <id>Q9LFS4</id>
    </interactant>
    <interactant intactId="EBI-20651159">
        <id>C0LGD7-2</id>
        <label>At1g06840</label>
    </interactant>
    <organismsDiffer>false</organismsDiffer>
    <experiments>2</experiments>
</comment>
<comment type="interaction">
    <interactant intactId="EBI-16146189">
        <id>Q9LFS4</id>
    </interactant>
    <interactant intactId="EBI-1238687">
        <id>O04567</id>
        <label>At1g27190</label>
    </interactant>
    <organismsDiffer>false</organismsDiffer>
    <experiments>2</experiments>
</comment>
<comment type="interaction">
    <interactant intactId="EBI-16146189">
        <id>Q9LFS4</id>
    </interactant>
    <interactant intactId="EBI-20651225">
        <id>C0LGI5</id>
        <label>At1g69990</label>
    </interactant>
    <organismsDiffer>false</organismsDiffer>
    <experiments>2</experiments>
</comment>
<comment type="interaction">
    <interactant intactId="EBI-16146189">
        <id>Q9LFS4</id>
    </interactant>
    <interactant intactId="EBI-20662256">
        <id>O65924</id>
        <label>At2g19210</label>
    </interactant>
    <organismsDiffer>false</organismsDiffer>
    <experiments>3</experiments>
</comment>
<comment type="interaction">
    <interactant intactId="EBI-16146189">
        <id>Q9LFS4</id>
    </interactant>
    <interactant intactId="EBI-20664191">
        <id>Q9LFG1</id>
        <label>At3g53590</label>
    </interactant>
    <organismsDiffer>false</organismsDiffer>
    <experiments>3</experiments>
</comment>
<comment type="interaction">
    <interactant intactId="EBI-16146189">
        <id>Q9LFS4</id>
    </interactant>
    <interactant intactId="EBI-16902452">
        <id>Q8VYT3</id>
        <label>At4g30520</label>
    </interactant>
    <organismsDiffer>false</organismsDiffer>
    <experiments>4</experiments>
</comment>
<comment type="interaction">
    <interactant intactId="EBI-16146189">
        <id>Q9LFS4</id>
    </interactant>
    <interactant intactId="EBI-6298290">
        <id>Q9ASS4</id>
        <label>At5g48380</label>
    </interactant>
    <organismsDiffer>false</organismsDiffer>
    <experiments>2</experiments>
</comment>
<comment type="interaction">
    <interactant intactId="EBI-16146189">
        <id>Q9LFS4</id>
    </interactant>
    <interactant intactId="EBI-617138">
        <id>Q94F62</id>
        <label>BAK1</label>
    </interactant>
    <organismsDiffer>false</organismsDiffer>
    <experiments>4</experiments>
</comment>
<comment type="interaction">
    <interactant intactId="EBI-16146189">
        <id>Q9LFS4</id>
    </interactant>
    <interactant intactId="EBI-590903">
        <id>Q9ZWC8</id>
        <label>BRL1</label>
    </interactant>
    <organismsDiffer>false</organismsDiffer>
    <experiments>2</experiments>
</comment>
<comment type="interaction">
    <interactant intactId="EBI-16146189">
        <id>Q9LFS4</id>
    </interactant>
    <interactant intactId="EBI-20651413">
        <id>Q9LJF3</id>
        <label>BRL3</label>
    </interactant>
    <organismsDiffer>false</organismsDiffer>
    <experiments>2</experiments>
</comment>
<comment type="interaction">
    <interactant intactId="EBI-16146189">
        <id>Q9LFS4</id>
    </interactant>
    <interactant intactId="EBI-8801168">
        <id>C0LGT6</id>
        <label>EFR</label>
    </interactant>
    <organismsDiffer>false</organismsDiffer>
    <experiments>2</experiments>
</comment>
<comment type="interaction">
    <interactant intactId="EBI-16146189">
        <id>Q9LFS4</id>
    </interactant>
    <interactant intactId="EBI-16940407">
        <id>Q42371</id>
        <label>ERECTA</label>
    </interactant>
    <organismsDiffer>false</organismsDiffer>
    <experiments>3</experiments>
</comment>
<comment type="interaction">
    <interactant intactId="EBI-16146189">
        <id>Q9LFS4</id>
    </interactant>
    <interactant intactId="EBI-16895926">
        <id>Q6XAT2</id>
        <label>ERL2</label>
    </interactant>
    <organismsDiffer>false</organismsDiffer>
    <experiments>4</experiments>
</comment>
<comment type="interaction">
    <interactant intactId="EBI-16146189">
        <id>Q9LFS4</id>
    </interactant>
    <interactant intactId="EBI-16904927">
        <id>C0LGX3</id>
        <label>HSL2</label>
    </interactant>
    <organismsDiffer>false</organismsDiffer>
    <experiments>2</experiments>
</comment>
<comment type="interaction">
    <interactant intactId="EBI-16146189">
        <id>Q9LFS4</id>
    </interactant>
    <interactant intactId="EBI-20651739">
        <id>Q9ZVD4</id>
        <label>LRR-RLK</label>
    </interactant>
    <organismsDiffer>false</organismsDiffer>
    <experiments>2</experiments>
</comment>
<comment type="interaction">
    <interactant intactId="EBI-16146189">
        <id>Q9LFS4</id>
    </interactant>
    <interactant intactId="EBI-16146189">
        <id>Q9LFS4</id>
        <label>NIK1</label>
    </interactant>
    <organismsDiffer>false</organismsDiffer>
    <experiments>3</experiments>
</comment>
<comment type="interaction">
    <interactant intactId="EBI-16146189">
        <id>Q9LFS4</id>
    </interactant>
    <interactant intactId="EBI-16904988">
        <id>Q9C7S5</id>
        <label>PSY1R</label>
    </interactant>
    <organismsDiffer>false</organismsDiffer>
    <experiments>3</experiments>
</comment>
<comment type="interaction">
    <interactant intactId="EBI-16146189">
        <id>Q9LFS4</id>
    </interactant>
    <interactant intactId="EBI-1238953">
        <id>Q9ZRF9</id>
        <label>RPK1</label>
    </interactant>
    <organismsDiffer>false</organismsDiffer>
    <experiments>4</experiments>
</comment>
<comment type="interaction">
    <interactant intactId="EBI-16146189">
        <id>Q9LFS4</id>
    </interactant>
    <interactant intactId="EBI-6290483">
        <id>Q9SKG5</id>
        <label>SERK4</label>
    </interactant>
    <organismsDiffer>false</organismsDiffer>
    <experiments>4</experiments>
</comment>
<comment type="subcellular location">
    <subcellularLocation>
        <location evidence="7">Cell membrane</location>
        <topology evidence="7">Single-pass type I membrane protein</topology>
    </subcellularLocation>
</comment>
<comment type="tissue specificity">
    <text evidence="7 11">Expressed in seedlings, leaves, roots, stems and flowers.</text>
</comment>
<comment type="PTM">
    <text evidence="10">Autophosphorylated.</text>
</comment>
<comment type="disruption phenotype">
    <text evidence="7 10">Enhanced susceptibility to geminivirus infection.</text>
</comment>
<comment type="similarity">
    <text evidence="13">Belongs to the protein kinase superfamily. Ser/Thr protein kinase family.</text>
</comment>
<comment type="sequence caution" evidence="13">
    <conflict type="erroneous initiation">
        <sequence resource="EMBL-CDS" id="AAM65586"/>
    </conflict>
    <text>Truncated N-terminus.</text>
</comment>
<evidence type="ECO:0000250" key="1">
    <source>
        <dbReference type="UniProtKB" id="Q94AG2"/>
    </source>
</evidence>
<evidence type="ECO:0000250" key="2">
    <source>
        <dbReference type="UniProtKB" id="Q94F62"/>
    </source>
</evidence>
<evidence type="ECO:0000250" key="3">
    <source>
        <dbReference type="UniProtKB" id="Q9LSI9"/>
    </source>
</evidence>
<evidence type="ECO:0000255" key="4"/>
<evidence type="ECO:0000255" key="5">
    <source>
        <dbReference type="PROSITE-ProRule" id="PRU00159"/>
    </source>
</evidence>
<evidence type="ECO:0000255" key="6">
    <source>
        <dbReference type="PROSITE-ProRule" id="PRU10027"/>
    </source>
</evidence>
<evidence type="ECO:0000269" key="7">
    <source>
    </source>
</evidence>
<evidence type="ECO:0000269" key="8">
    <source>
    </source>
</evidence>
<evidence type="ECO:0000269" key="9">
    <source>
    </source>
</evidence>
<evidence type="ECO:0000269" key="10">
    <source>
    </source>
</evidence>
<evidence type="ECO:0000269" key="11">
    <source>
    </source>
</evidence>
<evidence type="ECO:0000303" key="12">
    <source>
    </source>
</evidence>
<evidence type="ECO:0000305" key="13"/>
<evidence type="ECO:0000312" key="14">
    <source>
        <dbReference type="Araport" id="AT5G16000"/>
    </source>
</evidence>
<evidence type="ECO:0000312" key="15">
    <source>
        <dbReference type="EMBL" id="CAC01799.1"/>
    </source>
</evidence>
<reference key="1">
    <citation type="journal article" date="2000" name="Nature">
        <title>Sequence and analysis of chromosome 5 of the plant Arabidopsis thaliana.</title>
        <authorList>
            <person name="Tabata S."/>
            <person name="Kaneko T."/>
            <person name="Nakamura Y."/>
            <person name="Kotani H."/>
            <person name="Kato T."/>
            <person name="Asamizu E."/>
            <person name="Miyajima N."/>
            <person name="Sasamoto S."/>
            <person name="Kimura T."/>
            <person name="Hosouchi T."/>
            <person name="Kawashima K."/>
            <person name="Kohara M."/>
            <person name="Matsumoto M."/>
            <person name="Matsuno A."/>
            <person name="Muraki A."/>
            <person name="Nakayama S."/>
            <person name="Nakazaki N."/>
            <person name="Naruo K."/>
            <person name="Okumura S."/>
            <person name="Shinpo S."/>
            <person name="Takeuchi C."/>
            <person name="Wada T."/>
            <person name="Watanabe A."/>
            <person name="Yamada M."/>
            <person name="Yasuda M."/>
            <person name="Sato S."/>
            <person name="de la Bastide M."/>
            <person name="Huang E."/>
            <person name="Spiegel L."/>
            <person name="Gnoj L."/>
            <person name="O'Shaughnessy A."/>
            <person name="Preston R."/>
            <person name="Habermann K."/>
            <person name="Murray J."/>
            <person name="Johnson D."/>
            <person name="Rohlfing T."/>
            <person name="Nelson J."/>
            <person name="Stoneking T."/>
            <person name="Pepin K."/>
            <person name="Spieth J."/>
            <person name="Sekhon M."/>
            <person name="Armstrong J."/>
            <person name="Becker M."/>
            <person name="Belter E."/>
            <person name="Cordum H."/>
            <person name="Cordes M."/>
            <person name="Courtney L."/>
            <person name="Courtney W."/>
            <person name="Dante M."/>
            <person name="Du H."/>
            <person name="Edwards J."/>
            <person name="Fryman J."/>
            <person name="Haakensen B."/>
            <person name="Lamar E."/>
            <person name="Latreille P."/>
            <person name="Leonard S."/>
            <person name="Meyer R."/>
            <person name="Mulvaney E."/>
            <person name="Ozersky P."/>
            <person name="Riley A."/>
            <person name="Strowmatt C."/>
            <person name="Wagner-McPherson C."/>
            <person name="Wollam A."/>
            <person name="Yoakum M."/>
            <person name="Bell M."/>
            <person name="Dedhia N."/>
            <person name="Parnell L."/>
            <person name="Shah R."/>
            <person name="Rodriguez M."/>
            <person name="Hoon See L."/>
            <person name="Vil D."/>
            <person name="Baker J."/>
            <person name="Kirchoff K."/>
            <person name="Toth K."/>
            <person name="King L."/>
            <person name="Bahret A."/>
            <person name="Miller B."/>
            <person name="Marra M.A."/>
            <person name="Martienssen R."/>
            <person name="McCombie W.R."/>
            <person name="Wilson R.K."/>
            <person name="Murphy G."/>
            <person name="Bancroft I."/>
            <person name="Volckaert G."/>
            <person name="Wambutt R."/>
            <person name="Duesterhoeft A."/>
            <person name="Stiekema W."/>
            <person name="Pohl T."/>
            <person name="Entian K.-D."/>
            <person name="Terryn N."/>
            <person name="Hartley N."/>
            <person name="Bent E."/>
            <person name="Johnson S."/>
            <person name="Langham S.-A."/>
            <person name="McCullagh B."/>
            <person name="Robben J."/>
            <person name="Grymonprez B."/>
            <person name="Zimmermann W."/>
            <person name="Ramsperger U."/>
            <person name="Wedler H."/>
            <person name="Balke K."/>
            <person name="Wedler E."/>
            <person name="Peters S."/>
            <person name="van Staveren M."/>
            <person name="Dirkse W."/>
            <person name="Mooijman P."/>
            <person name="Klein Lankhorst R."/>
            <person name="Weitzenegger T."/>
            <person name="Bothe G."/>
            <person name="Rose M."/>
            <person name="Hauf J."/>
            <person name="Berneiser S."/>
            <person name="Hempel S."/>
            <person name="Feldpausch M."/>
            <person name="Lamberth S."/>
            <person name="Villarroel R."/>
            <person name="Gielen J."/>
            <person name="Ardiles W."/>
            <person name="Bents O."/>
            <person name="Lemcke K."/>
            <person name="Kolesov G."/>
            <person name="Mayer K.F.X."/>
            <person name="Rudd S."/>
            <person name="Schoof H."/>
            <person name="Schueller C."/>
            <person name="Zaccaria P."/>
            <person name="Mewes H.-W."/>
            <person name="Bevan M."/>
            <person name="Fransz P.F."/>
        </authorList>
    </citation>
    <scope>NUCLEOTIDE SEQUENCE [LARGE SCALE GENOMIC DNA]</scope>
    <source>
        <strain>cv. Columbia</strain>
    </source>
</reference>
<reference key="2">
    <citation type="journal article" date="2017" name="Plant J.">
        <title>Araport11: a complete reannotation of the Arabidopsis thaliana reference genome.</title>
        <authorList>
            <person name="Cheng C.Y."/>
            <person name="Krishnakumar V."/>
            <person name="Chan A.P."/>
            <person name="Thibaud-Nissen F."/>
            <person name="Schobel S."/>
            <person name="Town C.D."/>
        </authorList>
    </citation>
    <scope>GENOME REANNOTATION</scope>
    <source>
        <strain>cv. Columbia</strain>
    </source>
</reference>
<reference key="3">
    <citation type="journal article" date="2003" name="Science">
        <title>Empirical analysis of transcriptional activity in the Arabidopsis genome.</title>
        <authorList>
            <person name="Yamada K."/>
            <person name="Lim J."/>
            <person name="Dale J.M."/>
            <person name="Chen H."/>
            <person name="Shinn P."/>
            <person name="Palm C.J."/>
            <person name="Southwick A.M."/>
            <person name="Wu H.C."/>
            <person name="Kim C.J."/>
            <person name="Nguyen M."/>
            <person name="Pham P.K."/>
            <person name="Cheuk R.F."/>
            <person name="Karlin-Newmann G."/>
            <person name="Liu S.X."/>
            <person name="Lam B."/>
            <person name="Sakano H."/>
            <person name="Wu T."/>
            <person name="Yu G."/>
            <person name="Miranda M."/>
            <person name="Quach H.L."/>
            <person name="Tripp M."/>
            <person name="Chang C.H."/>
            <person name="Lee J.M."/>
            <person name="Toriumi M.J."/>
            <person name="Chan M.M."/>
            <person name="Tang C.C."/>
            <person name="Onodera C.S."/>
            <person name="Deng J.M."/>
            <person name="Akiyama K."/>
            <person name="Ansari Y."/>
            <person name="Arakawa T."/>
            <person name="Banh J."/>
            <person name="Banno F."/>
            <person name="Bowser L."/>
            <person name="Brooks S.Y."/>
            <person name="Carninci P."/>
            <person name="Chao Q."/>
            <person name="Choy N."/>
            <person name="Enju A."/>
            <person name="Goldsmith A.D."/>
            <person name="Gurjal M."/>
            <person name="Hansen N.F."/>
            <person name="Hayashizaki Y."/>
            <person name="Johnson-Hopson C."/>
            <person name="Hsuan V.W."/>
            <person name="Iida K."/>
            <person name="Karnes M."/>
            <person name="Khan S."/>
            <person name="Koesema E."/>
            <person name="Ishida J."/>
            <person name="Jiang P.X."/>
            <person name="Jones T."/>
            <person name="Kawai J."/>
            <person name="Kamiya A."/>
            <person name="Meyers C."/>
            <person name="Nakajima M."/>
            <person name="Narusaka M."/>
            <person name="Seki M."/>
            <person name="Sakurai T."/>
            <person name="Satou M."/>
            <person name="Tamse R."/>
            <person name="Vaysberg M."/>
            <person name="Wallender E.K."/>
            <person name="Wong C."/>
            <person name="Yamamura Y."/>
            <person name="Yuan S."/>
            <person name="Shinozaki K."/>
            <person name="Davis R.W."/>
            <person name="Theologis A."/>
            <person name="Ecker J.R."/>
        </authorList>
    </citation>
    <scope>NUCLEOTIDE SEQUENCE [LARGE SCALE MRNA]</scope>
    <source>
        <strain>cv. Columbia</strain>
    </source>
</reference>
<reference key="4">
    <citation type="journal article" date="2010" name="BMC Genomics">
        <title>Genome-wide cloning and sequence analysis of leucine-rich repeat receptor-like protein kinase genes in Arabidopsis thaliana.</title>
        <authorList>
            <person name="Gou X."/>
            <person name="He K."/>
            <person name="Yang H."/>
            <person name="Yuan T."/>
            <person name="Lin H."/>
            <person name="Clouse S.D."/>
            <person name="Li J."/>
        </authorList>
    </citation>
    <scope>NUCLEOTIDE SEQUENCE [LARGE SCALE MRNA]</scope>
    <source>
        <strain>cv. Columbia</strain>
    </source>
</reference>
<reference key="5">
    <citation type="submission" date="2002-03" db="EMBL/GenBank/DDBJ databases">
        <title>Full-length cDNA from Arabidopsis thaliana.</title>
        <authorList>
            <person name="Brover V.V."/>
            <person name="Troukhan M.E."/>
            <person name="Alexandrov N.A."/>
            <person name="Lu Y.-P."/>
            <person name="Flavell R.B."/>
            <person name="Feldmann K.A."/>
        </authorList>
    </citation>
    <scope>NUCLEOTIDE SEQUENCE [LARGE SCALE MRNA]</scope>
</reference>
<reference key="6">
    <citation type="journal article" date="2004" name="Genes Dev.">
        <title>The geminivirus nuclear shuttle protein is a virulence factor that suppresses transmembrane receptor kinase activity.</title>
        <authorList>
            <person name="Fontes E.P."/>
            <person name="Santos A.A."/>
            <person name="Luz D.F."/>
            <person name="Waclawovsky A.J."/>
            <person name="Chory J."/>
        </authorList>
    </citation>
    <scope>FUNCTION</scope>
    <scope>INTERACTION WITH CABBAGE LEAF CURL VIRUS NSP</scope>
    <scope>ACTIVITY REGULATION</scope>
    <scope>SUBCELLULAR LOCATION</scope>
    <scope>AUTOPHOSPHORYLATION</scope>
    <scope>TISSUE SPECIFICITY</scope>
    <scope>DISRUPTION PHENOTYPE</scope>
</reference>
<reference key="7">
    <citation type="journal article" date="2008" name="PLoS Pathog.">
        <title>Regulated nuclear trafficking of rpL10A mediated by NIK1 represents a defense strategy of plant cells against virus.</title>
        <authorList>
            <person name="Carvalho C.M."/>
            <person name="Santos A.A."/>
            <person name="Pires S.R."/>
            <person name="Rocha C.S."/>
            <person name="Saraiva D.I."/>
            <person name="Machado J.P."/>
            <person name="Mattos E.C."/>
            <person name="Fietto L.G."/>
            <person name="Fontes E.P."/>
        </authorList>
    </citation>
    <scope>FUNCTION</scope>
    <scope>INTERACTION WITH RPL10A AND RPL18B</scope>
</reference>
<reference key="8">
    <citation type="journal article" date="2008" name="Virology">
        <title>The ribosomal protein L10/QM-like protein is a component of the NIK-mediated antiviral signaling.</title>
        <authorList>
            <person name="Rocha C.S."/>
            <person name="Santos A.A."/>
            <person name="Machado J.P."/>
            <person name="Fontes E.P."/>
        </authorList>
    </citation>
    <scope>FUNCTION</scope>
    <scope>INTERACTION WITH RPL10A AND RPL18B</scope>
</reference>
<reference key="9">
    <citation type="journal article" date="2009" name="PLoS ONE">
        <title>Conserved threonine residues within the A-loop of the receptor NIK differentially regulate the kinase function required for antiviral signaling.</title>
        <authorList>
            <person name="Santos A.A."/>
            <person name="Carvalho C.M."/>
            <person name="Florentino L.H."/>
            <person name="Ramos H.J."/>
            <person name="Fontes E.P."/>
        </authorList>
    </citation>
    <scope>FUNCTION</scope>
    <scope>CATALYTIC ACTIVITY</scope>
    <scope>MUTAGENESIS OF THR-468; THR-469 AND THR-474</scope>
    <scope>PHOSPHORYLATION AT THR-469 AND THR-474</scope>
    <scope>IDENTIFICATION BY MASS SPECTROMETRY</scope>
    <scope>DISRUPTION PHENOTYPE</scope>
</reference>
<reference key="10">
    <citation type="journal article" date="2010" name="J. Exp. Bot.">
        <title>NSP-interacting kinase, NIK: a transducer of plant defence signalling.</title>
        <authorList>
            <person name="Santos A.A."/>
            <person name="Lopes K.V."/>
            <person name="Apfata J.A."/>
            <person name="Fontes E.P."/>
        </authorList>
    </citation>
    <scope>REVIEW</scope>
</reference>
<reference key="11">
    <citation type="journal article" date="2015" name="Nature">
        <title>NIK1-mediated translation suppression functions as a plant antiviral immunity mechanism.</title>
        <authorList>
            <person name="Zorzatto C."/>
            <person name="Machado J.P."/>
            <person name="Lopes K.V."/>
            <person name="Nascimento K.J."/>
            <person name="Pereira W.A."/>
            <person name="Brustolini O.J."/>
            <person name="Reis P.A."/>
            <person name="Calil I.P."/>
            <person name="Deguchi M."/>
            <person name="Sachetto-Martins G."/>
            <person name="Gouveia B.C."/>
            <person name="Loriato V.A."/>
            <person name="Silva M.A."/>
            <person name="Silva F.F."/>
            <person name="Santos A.A."/>
            <person name="Chory J."/>
            <person name="Fontes E.P."/>
        </authorList>
    </citation>
    <scope>FUNCTION</scope>
    <scope>MUTAGENESIS OF THR-474</scope>
    <scope>TISSUE SPECIFICITY</scope>
</reference>
<proteinExistence type="evidence at protein level"/>
<name>NIK1_ARATH</name>
<keyword id="KW-0067">ATP-binding</keyword>
<keyword id="KW-1003">Cell membrane</keyword>
<keyword id="KW-0325">Glycoprotein</keyword>
<keyword id="KW-0945">Host-virus interaction</keyword>
<keyword id="KW-0418">Kinase</keyword>
<keyword id="KW-0433">Leucine-rich repeat</keyword>
<keyword id="KW-0472">Membrane</keyword>
<keyword id="KW-0547">Nucleotide-binding</keyword>
<keyword id="KW-0597">Phosphoprotein</keyword>
<keyword id="KW-0611">Plant defense</keyword>
<keyword id="KW-0675">Receptor</keyword>
<keyword id="KW-1185">Reference proteome</keyword>
<keyword id="KW-0677">Repeat</keyword>
<keyword id="KW-0723">Serine/threonine-protein kinase</keyword>
<keyword id="KW-0732">Signal</keyword>
<keyword id="KW-0808">Transferase</keyword>
<keyword id="KW-0812">Transmembrane</keyword>
<keyword id="KW-1133">Transmembrane helix</keyword>